<reference key="1">
    <citation type="journal article" date="2009" name="J. Bacteriol.">
        <title>Complete genome sequence of Rhodobacter sphaeroides KD131.</title>
        <authorList>
            <person name="Lim S.-K."/>
            <person name="Kim S.J."/>
            <person name="Cha S.H."/>
            <person name="Oh Y.-K."/>
            <person name="Rhee H.-J."/>
            <person name="Kim M.-S."/>
            <person name="Lee J.K."/>
        </authorList>
    </citation>
    <scope>NUCLEOTIDE SEQUENCE [LARGE SCALE GENOMIC DNA]</scope>
    <source>
        <strain>KD131 / KCTC 12085</strain>
    </source>
</reference>
<evidence type="ECO:0000255" key="1">
    <source>
        <dbReference type="HAMAP-Rule" id="MF_00218"/>
    </source>
</evidence>
<keyword id="KW-0963">Cytoplasm</keyword>
<keyword id="KW-0210">Decarboxylase</keyword>
<keyword id="KW-0456">Lyase</keyword>
<keyword id="KW-0627">Porphyrin biosynthesis</keyword>
<proteinExistence type="inferred from homology"/>
<feature type="chain" id="PRO_1000197535" description="Uroporphyrinogen decarboxylase">
    <location>
        <begin position="1"/>
        <end position="343"/>
    </location>
</feature>
<feature type="binding site" evidence="1">
    <location>
        <begin position="23"/>
        <end position="27"/>
    </location>
    <ligand>
        <name>substrate</name>
    </ligand>
</feature>
<feature type="binding site" evidence="1">
    <location>
        <position position="73"/>
    </location>
    <ligand>
        <name>substrate</name>
    </ligand>
</feature>
<feature type="binding site" evidence="1">
    <location>
        <position position="150"/>
    </location>
    <ligand>
        <name>substrate</name>
    </ligand>
</feature>
<feature type="binding site" evidence="1">
    <location>
        <position position="205"/>
    </location>
    <ligand>
        <name>substrate</name>
    </ligand>
</feature>
<feature type="binding site" evidence="1">
    <location>
        <position position="322"/>
    </location>
    <ligand>
        <name>substrate</name>
    </ligand>
</feature>
<feature type="site" description="Transition state stabilizer" evidence="1">
    <location>
        <position position="73"/>
    </location>
</feature>
<organism>
    <name type="scientific">Cereibacter sphaeroides (strain KD131 / KCTC 12085)</name>
    <name type="common">Rhodobacter sphaeroides</name>
    <dbReference type="NCBI Taxonomy" id="557760"/>
    <lineage>
        <taxon>Bacteria</taxon>
        <taxon>Pseudomonadati</taxon>
        <taxon>Pseudomonadota</taxon>
        <taxon>Alphaproteobacteria</taxon>
        <taxon>Rhodobacterales</taxon>
        <taxon>Paracoccaceae</taxon>
        <taxon>Cereibacter</taxon>
    </lineage>
</organism>
<comment type="function">
    <text evidence="1">Catalyzes the decarboxylation of four acetate groups of uroporphyrinogen-III to yield coproporphyrinogen-III.</text>
</comment>
<comment type="catalytic activity">
    <reaction evidence="1">
        <text>uroporphyrinogen III + 4 H(+) = coproporphyrinogen III + 4 CO2</text>
        <dbReference type="Rhea" id="RHEA:19865"/>
        <dbReference type="ChEBI" id="CHEBI:15378"/>
        <dbReference type="ChEBI" id="CHEBI:16526"/>
        <dbReference type="ChEBI" id="CHEBI:57308"/>
        <dbReference type="ChEBI" id="CHEBI:57309"/>
        <dbReference type="EC" id="4.1.1.37"/>
    </reaction>
</comment>
<comment type="pathway">
    <text evidence="1">Porphyrin-containing compound metabolism; protoporphyrin-IX biosynthesis; coproporphyrinogen-III from 5-aminolevulinate: step 4/4.</text>
</comment>
<comment type="subunit">
    <text evidence="1">Homodimer.</text>
</comment>
<comment type="subcellular location">
    <subcellularLocation>
        <location evidence="1">Cytoplasm</location>
    </subcellularLocation>
</comment>
<comment type="similarity">
    <text evidence="1">Belongs to the uroporphyrinogen decarboxylase family.</text>
</comment>
<dbReference type="EC" id="4.1.1.37" evidence="1"/>
<dbReference type="EMBL" id="CP001150">
    <property type="protein sequence ID" value="ACM01898.1"/>
    <property type="molecule type" value="Genomic_DNA"/>
</dbReference>
<dbReference type="RefSeq" id="WP_002720862.1">
    <property type="nucleotide sequence ID" value="NC_011963.1"/>
</dbReference>
<dbReference type="SMR" id="B9KLM3"/>
<dbReference type="GeneID" id="67447430"/>
<dbReference type="KEGG" id="rsk:RSKD131_2038"/>
<dbReference type="HOGENOM" id="CLU_040933_0_0_5"/>
<dbReference type="UniPathway" id="UPA00251">
    <property type="reaction ID" value="UER00321"/>
</dbReference>
<dbReference type="GO" id="GO:0005829">
    <property type="term" value="C:cytosol"/>
    <property type="evidence" value="ECO:0007669"/>
    <property type="project" value="TreeGrafter"/>
</dbReference>
<dbReference type="GO" id="GO:0004853">
    <property type="term" value="F:uroporphyrinogen decarboxylase activity"/>
    <property type="evidence" value="ECO:0007669"/>
    <property type="project" value="UniProtKB-UniRule"/>
</dbReference>
<dbReference type="GO" id="GO:0019353">
    <property type="term" value="P:protoporphyrinogen IX biosynthetic process from glutamate"/>
    <property type="evidence" value="ECO:0007669"/>
    <property type="project" value="TreeGrafter"/>
</dbReference>
<dbReference type="CDD" id="cd00717">
    <property type="entry name" value="URO-D"/>
    <property type="match status" value="1"/>
</dbReference>
<dbReference type="Gene3D" id="3.20.20.210">
    <property type="match status" value="1"/>
</dbReference>
<dbReference type="HAMAP" id="MF_00218">
    <property type="entry name" value="URO_D"/>
    <property type="match status" value="1"/>
</dbReference>
<dbReference type="InterPro" id="IPR038071">
    <property type="entry name" value="UROD/MetE-like_sf"/>
</dbReference>
<dbReference type="InterPro" id="IPR006361">
    <property type="entry name" value="Uroporphyrinogen_deCO2ase_HemE"/>
</dbReference>
<dbReference type="InterPro" id="IPR000257">
    <property type="entry name" value="Uroporphyrinogen_deCOase"/>
</dbReference>
<dbReference type="NCBIfam" id="TIGR01464">
    <property type="entry name" value="hemE"/>
    <property type="match status" value="1"/>
</dbReference>
<dbReference type="PANTHER" id="PTHR21091">
    <property type="entry name" value="METHYLTETRAHYDROFOLATE:HOMOCYSTEINE METHYLTRANSFERASE RELATED"/>
    <property type="match status" value="1"/>
</dbReference>
<dbReference type="PANTHER" id="PTHR21091:SF169">
    <property type="entry name" value="UROPORPHYRINOGEN DECARBOXYLASE"/>
    <property type="match status" value="1"/>
</dbReference>
<dbReference type="Pfam" id="PF01208">
    <property type="entry name" value="URO-D"/>
    <property type="match status" value="1"/>
</dbReference>
<dbReference type="SUPFAM" id="SSF51726">
    <property type="entry name" value="UROD/MetE-like"/>
    <property type="match status" value="1"/>
</dbReference>
<dbReference type="PROSITE" id="PS00906">
    <property type="entry name" value="UROD_1"/>
    <property type="match status" value="1"/>
</dbReference>
<dbReference type="PROSITE" id="PS00907">
    <property type="entry name" value="UROD_2"/>
    <property type="match status" value="1"/>
</dbReference>
<accession>B9KLM3</accession>
<gene>
    <name evidence="1" type="primary">hemE</name>
    <name type="ordered locus">RSKD131_2038</name>
</gene>
<name>DCUP_CERSK</name>
<sequence>MTKTMLRALKGETLPTPPIWLMRQAGRYLPEYRATRAQAGDFLSLCYTPDLAAEVTLQPIRRYGFDAAILFADILLLPQALGADLWFETGEGPRMSTITDMAGVTALKGRDDIHETLAPVYETCRILARELPKETTFIGFAGMPWTVATYMIAGRGSKDQAAAHKLKDTDRPAFEALMDRVTEATIEYLAKQVEAGCEVVKLFDSWAGSLKGQDFEDFAVAPAKRIVSELKARFPGLPVIAFPREAGEGYIGFAEKTGADCVAIDNSVSPEWAAEKVQAGRTCVQGNLDPKYMVTGGEELVQATKRVVEAFRNGPHIFNLGHGITPEADPENVTLLVETIRGK</sequence>
<protein>
    <recommendedName>
        <fullName evidence="1">Uroporphyrinogen decarboxylase</fullName>
        <shortName evidence="1">UPD</shortName>
        <shortName evidence="1">URO-D</shortName>
        <ecNumber evidence="1">4.1.1.37</ecNumber>
    </recommendedName>
</protein>